<organismHost>
    <name type="scientific">Botryotinia fuckeliana</name>
    <name type="common">Noble rot fungus</name>
    <name type="synonym">Botrytis cinerea</name>
    <dbReference type="NCBI Taxonomy" id="40559"/>
</organismHost>
<organism>
    <name type="scientific">Botrytis virus F (isolate Botrytis cinerea/New Zealand/Howitt/2001)</name>
    <name type="common">BotV-F</name>
    <dbReference type="NCBI Taxonomy" id="686946"/>
    <lineage>
        <taxon>Viruses</taxon>
        <taxon>Riboviria</taxon>
        <taxon>Orthornavirae</taxon>
        <taxon>Kitrinoviricota</taxon>
        <taxon>Alsuviricetes</taxon>
        <taxon>Tymovirales</taxon>
        <taxon>Gammaflexiviridae</taxon>
        <taxon>Mycoflexivirus</taxon>
        <taxon>Botrytis virus F</taxon>
    </lineage>
</organism>
<reference key="1">
    <citation type="journal article" date="2001" name="J. Gen. Virol.">
        <title>Genome characterization of Botrytis virus F, a flexuous rod-shaped mycovirus resembling plant 'potex-like' viruses.</title>
        <authorList>
            <person name="Howitt R.L."/>
            <person name="Beever R.E."/>
            <person name="Pearson M.N."/>
            <person name="Forster R.L."/>
        </authorList>
    </citation>
    <scope>NUCLEOTIDE SEQUENCE [GENOMIC RNA]</scope>
</reference>
<proteinExistence type="predicted"/>
<gene>
    <name type="ORF">ORF2</name>
</gene>
<sequence>MTTSRFATFDIESETGLTPGAYPAPLPTLEQQLHDRNAILAAIPSLARAKLDAATLKRRFANFLLTLGMVGTTSKGSYEELIIPPVKGMGSSTGFRARELVQIITSSPAPPGFDGNQTLRQFARPYAPQVQNMIAQGKFKTNLYDKYGKSVGAPPHVCIDFNDAMDLQMFHSTAEFESAHKVRELAIAEASARENAPRPAANPRAAKPIIGQTAPAFHSGDAAKQSGGQPVNIKPSLAQSAGFDSHRPPPETPPRAGTPSSQKSGQSGQTTIQPPASHGILSGMLGSHKSTPHSSPQQTPKK</sequence>
<protein>
    <recommendedName>
        <fullName>Capsid protein</fullName>
        <shortName>CP</shortName>
    </recommendedName>
    <alternativeName>
        <fullName>Coat protein</fullName>
    </alternativeName>
</protein>
<keyword id="KW-0167">Capsid protein</keyword>
<keyword id="KW-1139">Helical capsid protein</keyword>
<keyword id="KW-1185">Reference proteome</keyword>
<keyword id="KW-0946">Virion</keyword>
<name>CAPSD_BOTVF</name>
<dbReference type="EMBL" id="AF238884">
    <property type="protein sequence ID" value="AAG23417.1"/>
    <property type="molecule type" value="Genomic_RNA"/>
</dbReference>
<dbReference type="RefSeq" id="NP_068550.1">
    <property type="nucleotide sequence ID" value="NC_002604.1"/>
</dbReference>
<dbReference type="SMR" id="Q9DRA0"/>
<dbReference type="KEGG" id="vg:912252"/>
<dbReference type="Proteomes" id="UP000000398">
    <property type="component" value="Segment"/>
</dbReference>
<dbReference type="GO" id="GO:0019029">
    <property type="term" value="C:helical viral capsid"/>
    <property type="evidence" value="ECO:0007669"/>
    <property type="project" value="UniProtKB-KW"/>
</dbReference>
<accession>Q9DRA0</accession>
<feature type="chain" id="PRO_0000402502" description="Capsid protein">
    <location>
        <begin position="1"/>
        <end position="302"/>
    </location>
</feature>
<feature type="region of interest" description="Disordered" evidence="1">
    <location>
        <begin position="217"/>
        <end position="302"/>
    </location>
</feature>
<feature type="compositionally biased region" description="Low complexity" evidence="1">
    <location>
        <begin position="254"/>
        <end position="271"/>
    </location>
</feature>
<feature type="compositionally biased region" description="Polar residues" evidence="1">
    <location>
        <begin position="288"/>
        <end position="302"/>
    </location>
</feature>
<comment type="function">
    <text evidence="2">Capsid protein self-assembles to form a flexuous, filamentous capsid (Potential). The capsid encapsulates the single-stranded RNA genome.</text>
</comment>
<comment type="subcellular location">
    <subcellularLocation>
        <location evidence="2">Virion</location>
    </subcellularLocation>
</comment>
<evidence type="ECO:0000256" key="1">
    <source>
        <dbReference type="SAM" id="MobiDB-lite"/>
    </source>
</evidence>
<evidence type="ECO:0000305" key="2"/>